<accession>I1RF62</accession>
<accession>A0A098D823</accession>
<keyword id="KW-0186">Copper</keyword>
<keyword id="KW-0325">Glycoprotein</keyword>
<keyword id="KW-0479">Metal-binding</keyword>
<keyword id="KW-0560">Oxidoreductase</keyword>
<keyword id="KW-1185">Reference proteome</keyword>
<keyword id="KW-0677">Repeat</keyword>
<keyword id="KW-0964">Secreted</keyword>
<keyword id="KW-0732">Signal</keyword>
<evidence type="ECO:0000250" key="1">
    <source>
        <dbReference type="UniProtKB" id="Q70KY3"/>
    </source>
</evidence>
<evidence type="ECO:0000255" key="2"/>
<evidence type="ECO:0000255" key="3">
    <source>
        <dbReference type="PROSITE-ProRule" id="PRU00498"/>
    </source>
</evidence>
<evidence type="ECO:0000256" key="4">
    <source>
        <dbReference type="SAM" id="MobiDB-lite"/>
    </source>
</evidence>
<evidence type="ECO:0000269" key="5">
    <source>
    </source>
</evidence>
<evidence type="ECO:0000269" key="6">
    <source>
    </source>
</evidence>
<evidence type="ECO:0000269" key="7">
    <source>
    </source>
</evidence>
<evidence type="ECO:0000269" key="8">
    <source>
    </source>
</evidence>
<evidence type="ECO:0000269" key="9">
    <source>
    </source>
</evidence>
<evidence type="ECO:0000269" key="10">
    <source>
    </source>
</evidence>
<evidence type="ECO:0000303" key="11">
    <source>
    </source>
</evidence>
<evidence type="ECO:0000303" key="12">
    <source>
    </source>
</evidence>
<evidence type="ECO:0000303" key="13">
    <source>
    </source>
</evidence>
<evidence type="ECO:0000305" key="14"/>
<evidence type="ECO:0000305" key="15">
    <source>
    </source>
</evidence>
<organism>
    <name type="scientific">Gibberella zeae (strain ATCC MYA-4620 / CBS 123657 / FGSC 9075 / NRRL 31084 / PH-1)</name>
    <name type="common">Wheat head blight fungus</name>
    <name type="synonym">Fusarium graminearum</name>
    <dbReference type="NCBI Taxonomy" id="229533"/>
    <lineage>
        <taxon>Eukaryota</taxon>
        <taxon>Fungi</taxon>
        <taxon>Dikarya</taxon>
        <taxon>Ascomycota</taxon>
        <taxon>Pezizomycotina</taxon>
        <taxon>Sordariomycetes</taxon>
        <taxon>Hypocreomycetidae</taxon>
        <taxon>Hypocreales</taxon>
        <taxon>Nectriaceae</taxon>
        <taxon>Fusarium</taxon>
    </lineage>
</organism>
<gene>
    <name evidence="12" type="primary">GIP1</name>
    <name evidence="11" type="synonym">lac1</name>
    <name type="ORF">FG02328</name>
    <name type="ORF">FGRAMPH1_01T05601</name>
</gene>
<proteinExistence type="evidence at protein level"/>
<reference key="1">
    <citation type="journal article" date="2007" name="Science">
        <title>The Fusarium graminearum genome reveals a link between localized polymorphism and pathogen specialization.</title>
        <authorList>
            <person name="Cuomo C.A."/>
            <person name="Gueldener U."/>
            <person name="Xu J.-R."/>
            <person name="Trail F."/>
            <person name="Turgeon B.G."/>
            <person name="Di Pietro A."/>
            <person name="Walton J.D."/>
            <person name="Ma L.-J."/>
            <person name="Baker S.E."/>
            <person name="Rep M."/>
            <person name="Adam G."/>
            <person name="Antoniw J."/>
            <person name="Baldwin T."/>
            <person name="Calvo S.E."/>
            <person name="Chang Y.-L."/>
            <person name="DeCaprio D."/>
            <person name="Gale L.R."/>
            <person name="Gnerre S."/>
            <person name="Goswami R.S."/>
            <person name="Hammond-Kosack K."/>
            <person name="Harris L.J."/>
            <person name="Hilburn K."/>
            <person name="Kennell J.C."/>
            <person name="Kroken S."/>
            <person name="Magnuson J.K."/>
            <person name="Mannhaupt G."/>
            <person name="Mauceli E.W."/>
            <person name="Mewes H.-W."/>
            <person name="Mitterbauer R."/>
            <person name="Muehlbauer G."/>
            <person name="Muensterkoetter M."/>
            <person name="Nelson D."/>
            <person name="O'Donnell K."/>
            <person name="Ouellet T."/>
            <person name="Qi W."/>
            <person name="Quesneville H."/>
            <person name="Roncero M.I.G."/>
            <person name="Seong K.-Y."/>
            <person name="Tetko I.V."/>
            <person name="Urban M."/>
            <person name="Waalwijk C."/>
            <person name="Ward T.J."/>
            <person name="Yao J."/>
            <person name="Birren B.W."/>
            <person name="Kistler H.C."/>
        </authorList>
    </citation>
    <scope>NUCLEOTIDE SEQUENCE [LARGE SCALE GENOMIC DNA]</scope>
    <source>
        <strain>ATCC MYA-4620 / CBS 123657 / FGSC 9075 / NRRL 31084 / PH-1</strain>
    </source>
</reference>
<reference key="2">
    <citation type="journal article" date="2010" name="Nature">
        <title>Comparative genomics reveals mobile pathogenicity chromosomes in Fusarium.</title>
        <authorList>
            <person name="Ma L.-J."/>
            <person name="van der Does H.C."/>
            <person name="Borkovich K.A."/>
            <person name="Coleman J.J."/>
            <person name="Daboussi M.-J."/>
            <person name="Di Pietro A."/>
            <person name="Dufresne M."/>
            <person name="Freitag M."/>
            <person name="Grabherr M."/>
            <person name="Henrissat B."/>
            <person name="Houterman P.M."/>
            <person name="Kang S."/>
            <person name="Shim W.-B."/>
            <person name="Woloshuk C."/>
            <person name="Xie X."/>
            <person name="Xu J.-R."/>
            <person name="Antoniw J."/>
            <person name="Baker S.E."/>
            <person name="Bluhm B.H."/>
            <person name="Breakspear A."/>
            <person name="Brown D.W."/>
            <person name="Butchko R.A.E."/>
            <person name="Chapman S."/>
            <person name="Coulson R."/>
            <person name="Coutinho P.M."/>
            <person name="Danchin E.G.J."/>
            <person name="Diener A."/>
            <person name="Gale L.R."/>
            <person name="Gardiner D.M."/>
            <person name="Goff S."/>
            <person name="Hammond-Kosack K.E."/>
            <person name="Hilburn K."/>
            <person name="Hua-Van A."/>
            <person name="Jonkers W."/>
            <person name="Kazan K."/>
            <person name="Kodira C.D."/>
            <person name="Koehrsen M."/>
            <person name="Kumar L."/>
            <person name="Lee Y.-H."/>
            <person name="Li L."/>
            <person name="Manners J.M."/>
            <person name="Miranda-Saavedra D."/>
            <person name="Mukherjee M."/>
            <person name="Park G."/>
            <person name="Park J."/>
            <person name="Park S.-Y."/>
            <person name="Proctor R.H."/>
            <person name="Regev A."/>
            <person name="Ruiz-Roldan M.C."/>
            <person name="Sain D."/>
            <person name="Sakthikumar S."/>
            <person name="Sykes S."/>
            <person name="Schwartz D.C."/>
            <person name="Turgeon B.G."/>
            <person name="Wapinski I."/>
            <person name="Yoder O."/>
            <person name="Young S."/>
            <person name="Zeng Q."/>
            <person name="Zhou S."/>
            <person name="Galagan J."/>
            <person name="Cuomo C.A."/>
            <person name="Kistler H.C."/>
            <person name="Rep M."/>
        </authorList>
    </citation>
    <scope>GENOME REANNOTATION</scope>
    <source>
        <strain>ATCC MYA-4620 / CBS 123657 / FGSC 9075 / NRRL 31084 / PH-1</strain>
    </source>
</reference>
<reference key="3">
    <citation type="journal article" date="2015" name="BMC Genomics">
        <title>The completed genome sequence of the pathogenic ascomycete fungus Fusarium graminearum.</title>
        <authorList>
            <person name="King R."/>
            <person name="Urban M."/>
            <person name="Hammond-Kosack M.C.U."/>
            <person name="Hassani-Pak K."/>
            <person name="Hammond-Kosack K.E."/>
        </authorList>
    </citation>
    <scope>NUCLEOTIDE SEQUENCE [LARGE SCALE GENOMIC DNA]</scope>
    <source>
        <strain>ATCC MYA-4620 / CBS 123657 / FGSC 9075 / NRRL 31084 / PH-1</strain>
    </source>
</reference>
<reference key="4">
    <citation type="journal article" date="2005" name="Appl. Environ. Microbiol.">
        <title>Putative polyketide synthase and laccase genes for biosynthesis of aurofusarin in Gibberella zeae.</title>
        <authorList>
            <person name="Kim J.E."/>
            <person name="Han K.H."/>
            <person name="Jin J."/>
            <person name="Kim H."/>
            <person name="Kim J.C."/>
            <person name="Yun S.H."/>
            <person name="Lee Y.W."/>
        </authorList>
    </citation>
    <scope>FUNCTION</scope>
    <scope>DISRUPTION PHENOTYPE</scope>
</reference>
<reference key="5">
    <citation type="journal article" date="2005" name="Fungal Genet. Biol.">
        <title>Identification of a gene cluster responsible for the biosynthesis of aurofusarin in the Fusarium graminearum species complex.</title>
        <authorList>
            <person name="Malz S."/>
            <person name="Grell M.N."/>
            <person name="Thrane C."/>
            <person name="Maier F.J."/>
            <person name="Rosager P."/>
            <person name="Felk A."/>
            <person name="Albertsen K.S."/>
            <person name="Salomon S."/>
            <person name="Bohn L."/>
            <person name="Schaefer W."/>
            <person name="Giese H."/>
        </authorList>
    </citation>
    <scope>FUNCTION</scope>
    <scope>PATHWAY</scope>
</reference>
<reference key="6">
    <citation type="journal article" date="2006" name="Mol. Microbiol.">
        <title>The biosynthetic pathway for aurofusarin in Fusarium graminearum reveals a close link between the naphthoquinones and naphthopyrones.</title>
        <authorList>
            <person name="Frandsen R.J."/>
            <person name="Nielsen N.J."/>
            <person name="Maolanon N."/>
            <person name="Soerensen J.C."/>
            <person name="Olsson S."/>
            <person name="Nielsen J."/>
            <person name="Giese H."/>
        </authorList>
    </citation>
    <scope>FUNCTION</scope>
    <scope>INDUCTION</scope>
    <scope>DISRUPTION PHENOTYPE</scope>
    <scope>PATHWAY</scope>
</reference>
<reference key="7">
    <citation type="journal article" date="2006" name="Appl. Environ. Microbiol.">
        <title>GIP2, a putative transcription factor that regulates the aurofusarin biosynthetic gene cluster in Gibberella zeae.</title>
        <authorList>
            <person name="Kim J.E."/>
            <person name="Jin J."/>
            <person name="Kim H."/>
            <person name="Kim J.C."/>
            <person name="Yun S.H."/>
            <person name="Lee Y.W."/>
        </authorList>
    </citation>
    <scope>INDUCTION</scope>
</reference>
<reference key="8">
    <citation type="journal article" date="2011" name="J. Biol. Chem.">
        <title>Two novel classes of enzymes are required for the biosynthesis of aurofusarin in Fusarium graminearum.</title>
        <authorList>
            <person name="Frandsen R.J."/>
            <person name="Schuett C."/>
            <person name="Lund B.W."/>
            <person name="Staerk D."/>
            <person name="Nielsen J."/>
            <person name="Olsson S."/>
            <person name="Giese H."/>
        </authorList>
    </citation>
    <scope>FUNCTION</scope>
    <scope>SUBCELLULAR LOCATION</scope>
    <scope>SUBUNIT</scope>
    <scope>PATHWAY</scope>
</reference>
<reference key="9">
    <citation type="journal article" date="2013" name="Microb. Cell Fact.">
        <title>Reconstruction of the biosynthetic pathway for the core fungal polyketide scaffold rubrofusarin in Saccharomyces cerevisiae.</title>
        <authorList>
            <person name="Rugbjerg P."/>
            <person name="Naesby M."/>
            <person name="Mortensen U.H."/>
            <person name="Frandsen R.J."/>
        </authorList>
    </citation>
    <scope>FUNCTION</scope>
</reference>
<comment type="function">
    <text evidence="5 6 8 9 10">Multicopper oxidase; part of the gene cluster that mediates the biosynthesis of aurofusarin, a red mycelium pigment which is acting as a mycotoxin (PubMed:15809006, PubMed:15811992, PubMed:16879655). The first step is performed by the polyketide synthase which condenses one acetyl-CoA and 6 malonyl-CoA units to form the first intermediate, the cyclic heptaketide and yellow pigment YWA1 (PubMed:21296881, PubMed:23557488). The C2 hydroxyl group in the pyrone ring of YWA1 is probably formed during ring closure by an aldol-type cyclization reaction (PubMed:21296881). The dehydratase aurZ then acts as the first tailoring enzyme in the aurofusarin biosynthetic pathway by converting YWA1 to nor-rubrofusarin (PubMed:21296881, PubMed:23557488). Nor-rubrofusarin is then methylated to rubrofusarin by the O-methyltransferase aurJ (PubMed:21296881, PubMed:23557488). Rubrofusarin is then transported across the plasma membrane by the rubrofusarin-specific pump aurT for further enzymatic processing by the extracellular complex composed of GIP1, aurF, aurO and aurS to yield aurofusarin (PubMed:21296881).</text>
</comment>
<comment type="pathway">
    <text evidence="5 8 9">Pigment biosynthesis.</text>
</comment>
<comment type="subunit">
    <text evidence="15">Might be part of an extracellular enzyme complex composed of GIP1, aurF, aurO and aurS (PubMed:21296881).</text>
</comment>
<comment type="subcellular location">
    <subcellularLocation>
        <location evidence="15">Secreted</location>
    </subcellularLocation>
    <subcellularLocation>
        <location evidence="15">Secreted</location>
        <location evidence="15">Extracellular space</location>
    </subcellularLocation>
</comment>
<comment type="induction">
    <text evidence="7 8">Expression is regulated by the aurofusarin biosynthesis cluster-specific transcription factor aurR1/GIP2 (PubMed:16461721, PubMed:16879655).</text>
</comment>
<comment type="disruption phenotype">
    <text evidence="6 8">Impairs autofusarin biosynthesis and leads to a yellow pigmentation via accumulation of the intermediate rubrofusarin (PubMed:15811992, PubMed:16879655).</text>
</comment>
<comment type="similarity">
    <text evidence="14">Belongs to the multicopper oxidase family.</text>
</comment>
<protein>
    <recommendedName>
        <fullName evidence="12">Multicopper oxidase GIP1</fullName>
        <ecNumber evidence="14">1.-.-.-</ecNumber>
    </recommendedName>
    <alternativeName>
        <fullName evidence="13">Aurofusarin biosynthesis cluster protein GIP1</fullName>
    </alternativeName>
    <alternativeName>
        <fullName evidence="12">Gibberella pigment protein 1</fullName>
    </alternativeName>
    <alternativeName>
        <fullName evidence="11">Laccase-1</fullName>
    </alternativeName>
</protein>
<dbReference type="EC" id="1.-.-.-" evidence="14"/>
<dbReference type="EMBL" id="HG970332">
    <property type="protein sequence ID" value="CEF74605.1"/>
    <property type="molecule type" value="Genomic_DNA"/>
</dbReference>
<dbReference type="RefSeq" id="XP_011318237.1">
    <property type="nucleotide sequence ID" value="XM_011319935.1"/>
</dbReference>
<dbReference type="SMR" id="I1RF62"/>
<dbReference type="STRING" id="229533.I1RF62"/>
<dbReference type="GlyCosmos" id="I1RF62">
    <property type="glycosylation" value="6 sites, No reported glycans"/>
</dbReference>
<dbReference type="KEGG" id="fgr:FGSG_02328"/>
<dbReference type="VEuPathDB" id="FungiDB:FGRAMPH1_01G05601"/>
<dbReference type="eggNOG" id="KOG1263">
    <property type="taxonomic scope" value="Eukaryota"/>
</dbReference>
<dbReference type="HOGENOM" id="CLU_006504_5_0_1"/>
<dbReference type="InParanoid" id="I1RF62"/>
<dbReference type="OrthoDB" id="69406at110618"/>
<dbReference type="BioCyc" id="MetaCyc:MONOMER-19450"/>
<dbReference type="PHI-base" id="PHI:3991"/>
<dbReference type="PHI-base" id="PHI:712"/>
<dbReference type="Proteomes" id="UP000070720">
    <property type="component" value="Chromosome 1"/>
</dbReference>
<dbReference type="GO" id="GO:0005576">
    <property type="term" value="C:extracellular region"/>
    <property type="evidence" value="ECO:0007669"/>
    <property type="project" value="UniProtKB-SubCell"/>
</dbReference>
<dbReference type="GO" id="GO:0005507">
    <property type="term" value="F:copper ion binding"/>
    <property type="evidence" value="ECO:0007669"/>
    <property type="project" value="InterPro"/>
</dbReference>
<dbReference type="GO" id="GO:0016491">
    <property type="term" value="F:oxidoreductase activity"/>
    <property type="evidence" value="ECO:0007669"/>
    <property type="project" value="UniProtKB-KW"/>
</dbReference>
<dbReference type="CDD" id="cd13850">
    <property type="entry name" value="CuRO_1_Abr2_like"/>
    <property type="match status" value="1"/>
</dbReference>
<dbReference type="CDD" id="cd13876">
    <property type="entry name" value="CuRO_2_Abr2_like"/>
    <property type="match status" value="1"/>
</dbReference>
<dbReference type="CDD" id="cd13898">
    <property type="entry name" value="CuRO_3_Abr2_like"/>
    <property type="match status" value="1"/>
</dbReference>
<dbReference type="Gene3D" id="2.60.40.420">
    <property type="entry name" value="Cupredoxins - blue copper proteins"/>
    <property type="match status" value="3"/>
</dbReference>
<dbReference type="InterPro" id="IPR011707">
    <property type="entry name" value="Cu-oxidase-like_N"/>
</dbReference>
<dbReference type="InterPro" id="IPR001117">
    <property type="entry name" value="Cu-oxidase_2nd"/>
</dbReference>
<dbReference type="InterPro" id="IPR011706">
    <property type="entry name" value="Cu-oxidase_C"/>
</dbReference>
<dbReference type="InterPro" id="IPR045087">
    <property type="entry name" value="Cu-oxidase_fam"/>
</dbReference>
<dbReference type="InterPro" id="IPR033138">
    <property type="entry name" value="Cu_oxidase_CS"/>
</dbReference>
<dbReference type="InterPro" id="IPR002355">
    <property type="entry name" value="Cu_oxidase_Cu_BS"/>
</dbReference>
<dbReference type="InterPro" id="IPR008972">
    <property type="entry name" value="Cupredoxin"/>
</dbReference>
<dbReference type="PANTHER" id="PTHR11709:SF488">
    <property type="entry name" value="LACCASE-RELATED"/>
    <property type="match status" value="1"/>
</dbReference>
<dbReference type="PANTHER" id="PTHR11709">
    <property type="entry name" value="MULTI-COPPER OXIDASE"/>
    <property type="match status" value="1"/>
</dbReference>
<dbReference type="Pfam" id="PF00394">
    <property type="entry name" value="Cu-oxidase"/>
    <property type="match status" value="1"/>
</dbReference>
<dbReference type="Pfam" id="PF07731">
    <property type="entry name" value="Cu-oxidase_2"/>
    <property type="match status" value="1"/>
</dbReference>
<dbReference type="Pfam" id="PF07732">
    <property type="entry name" value="Cu-oxidase_3"/>
    <property type="match status" value="1"/>
</dbReference>
<dbReference type="SUPFAM" id="SSF49503">
    <property type="entry name" value="Cupredoxins"/>
    <property type="match status" value="3"/>
</dbReference>
<dbReference type="PROSITE" id="PS00079">
    <property type="entry name" value="MULTICOPPER_OXIDASE1"/>
    <property type="match status" value="1"/>
</dbReference>
<dbReference type="PROSITE" id="PS00080">
    <property type="entry name" value="MULTICOPPER_OXIDASE2"/>
    <property type="match status" value="1"/>
</dbReference>
<sequence length="677" mass="75310">MLTSPRLILLLLAWVFSALVASALVKKDWTITWEPGAPNGQERNMIKINNQFPGPTILCDEDDDIEVTVHNKMPFNTTVHWHGLERVNCVRMMGTPWSDGTPGMSQKPIEMGQSFIYRFKASPAGTHWYHSHSRATVLDGLYGPIFIRRKPDAPAPWHLISKEQADIDAMSRAVIDPKLVMVSDWTRFMSWEYMAAEESSGMAIFCSDSILVNGKGSLYCPDVDVLINHTSTYMKYGLYPRQVNDKGCFPFMRSTQGPYLTTGKPETIPLHLQHGCTPAEGTNETIEVDPADQWASLNFIGGATFKTIVFSVDEHDMWVYEVDGHYIVPQRVNTVHMYAGERYAVMIKLDKTPKDYTIRVADSGLTQVISAFATLRYKGGIQGSDSVGVIDYGGQNSTKDGSVITLDREHLPPYPPNPPARKADAMHVLSTHRWKSAWQYTMSGHGMYEEDRSAYGPLLYDPHSADAMDEGLVIRTKNGSWVDLVLQVGSLPGQPQEFPHMMHKHTGKTWQIGSGMGIWNYSSVEEAIAAEPHNFDLDTPKWRDTFVTSFDGSAWIVLRYQVTNPGPWLFHCHIETHLAGGMAIAILDGIDVWPQIPAEYGPDQRGFMPGTLPELESGGKQGTVDKQCPLLAVSPSGGPKKDSGETSASDSRWETLIRGLIQVLQGWLSDEASSRSS</sequence>
<name>GIP1_GIBZE</name>
<feature type="signal peptide" evidence="2">
    <location>
        <begin position="1"/>
        <end position="23"/>
    </location>
</feature>
<feature type="chain" id="PRO_5010124150" description="Multicopper oxidase GIP1">
    <location>
        <begin position="24"/>
        <end position="677"/>
    </location>
</feature>
<feature type="domain" description="Plastocyanin-like 1" evidence="2">
    <location>
        <begin position="31"/>
        <end position="150"/>
    </location>
</feature>
<feature type="domain" description="Plastocyanin-like 2" evidence="2">
    <location>
        <begin position="179"/>
        <end position="379"/>
    </location>
</feature>
<feature type="domain" description="Plastocyanin-like 3" evidence="2">
    <location>
        <begin position="469"/>
        <end position="588"/>
    </location>
</feature>
<feature type="region of interest" description="Disordered" evidence="4">
    <location>
        <begin position="629"/>
        <end position="651"/>
    </location>
</feature>
<feature type="binding site" evidence="1">
    <location>
        <position position="80"/>
    </location>
    <ligand>
        <name>Cu cation</name>
        <dbReference type="ChEBI" id="CHEBI:23378"/>
        <label>1</label>
    </ligand>
</feature>
<feature type="binding site" evidence="1">
    <location>
        <position position="82"/>
    </location>
    <ligand>
        <name>Cu cation</name>
        <dbReference type="ChEBI" id="CHEBI:23378"/>
        <label>2</label>
    </ligand>
</feature>
<feature type="binding site" evidence="1">
    <location>
        <position position="130"/>
    </location>
    <ligand>
        <name>Cu cation</name>
        <dbReference type="ChEBI" id="CHEBI:23378"/>
        <label>2</label>
    </ligand>
</feature>
<feature type="binding site" evidence="1">
    <location>
        <position position="132"/>
    </location>
    <ligand>
        <name>Cu cation</name>
        <dbReference type="ChEBI" id="CHEBI:23378"/>
        <label>3</label>
    </ligand>
</feature>
<feature type="binding site" evidence="1">
    <location>
        <position position="503"/>
    </location>
    <ligand>
        <name>Cu cation</name>
        <dbReference type="ChEBI" id="CHEBI:23378"/>
        <label>4</label>
    </ligand>
</feature>
<feature type="glycosylation site" description="N-linked (GlcNAc...) asparagine" evidence="3">
    <location>
        <position position="76"/>
    </location>
</feature>
<feature type="glycosylation site" description="N-linked (GlcNAc...) asparagine" evidence="3">
    <location>
        <position position="228"/>
    </location>
</feature>
<feature type="glycosylation site" description="N-linked (GlcNAc...) asparagine" evidence="3">
    <location>
        <position position="283"/>
    </location>
</feature>
<feature type="glycosylation site" description="N-linked (GlcNAc...) asparagine" evidence="3">
    <location>
        <position position="396"/>
    </location>
</feature>
<feature type="glycosylation site" description="N-linked (GlcNAc...) asparagine" evidence="3">
    <location>
        <position position="478"/>
    </location>
</feature>
<feature type="glycosylation site" description="N-linked (GlcNAc...) asparagine" evidence="3">
    <location>
        <position position="520"/>
    </location>
</feature>